<organism>
    <name type="scientific">Agrobacterium fabrum (strain C58 / ATCC 33970)</name>
    <name type="common">Agrobacterium tumefaciens (strain C58)</name>
    <dbReference type="NCBI Taxonomy" id="176299"/>
    <lineage>
        <taxon>Bacteria</taxon>
        <taxon>Pseudomonadati</taxon>
        <taxon>Pseudomonadota</taxon>
        <taxon>Alphaproteobacteria</taxon>
        <taxon>Hyphomicrobiales</taxon>
        <taxon>Rhizobiaceae</taxon>
        <taxon>Rhizobium/Agrobacterium group</taxon>
        <taxon>Agrobacterium</taxon>
        <taxon>Agrobacterium tumefaciens complex</taxon>
    </lineage>
</organism>
<comment type="similarity">
    <text evidence="1">Belongs to the TraD family.</text>
</comment>
<comment type="sequence caution" evidence="1">
    <conflict type="erroneous initiation">
        <sequence resource="EMBL-CDS" id="AAK91089"/>
    </conflict>
</comment>
<name>TRAD_AGRFC</name>
<evidence type="ECO:0000305" key="1"/>
<geneLocation type="plasmid">
    <name>pTiC58</name>
</geneLocation>
<dbReference type="EMBL" id="AF010180">
    <property type="protein sequence ID" value="AAC17205.1"/>
    <property type="molecule type" value="Genomic_DNA"/>
</dbReference>
<dbReference type="EMBL" id="AE007871">
    <property type="protein sequence ID" value="AAK91089.1"/>
    <property type="status" value="ALT_INIT"/>
    <property type="molecule type" value="Genomic_DNA"/>
</dbReference>
<dbReference type="PIR" id="AC3243">
    <property type="entry name" value="AC3243"/>
</dbReference>
<dbReference type="PIR" id="T03417">
    <property type="entry name" value="T03417"/>
</dbReference>
<dbReference type="RefSeq" id="NP_396648.1">
    <property type="nucleotide sequence ID" value="NC_003065.3"/>
</dbReference>
<dbReference type="RefSeq" id="WP_010974895.1">
    <property type="nucleotide sequence ID" value="NZ_KY000036.1"/>
</dbReference>
<dbReference type="RefSeq" id="WP_032489195.1">
    <property type="nucleotide sequence ID" value="NC_003065.3"/>
</dbReference>
<dbReference type="EnsemblBacteria" id="AAK91089">
    <property type="protein sequence ID" value="AAK91089"/>
    <property type="gene ID" value="Atu6125"/>
</dbReference>
<dbReference type="GeneID" id="1137448"/>
<dbReference type="KEGG" id="atu:Atu6125"/>
<dbReference type="PATRIC" id="fig|176299.10.peg.5332"/>
<dbReference type="HOGENOM" id="CLU_182836_1_0_5"/>
<dbReference type="OrthoDB" id="5653691at2"/>
<dbReference type="Proteomes" id="UP000000813">
    <property type="component" value="Plasmid Ti"/>
</dbReference>
<dbReference type="InterPro" id="IPR009444">
    <property type="entry name" value="Conjugal_tfr_TraD_a-type"/>
</dbReference>
<dbReference type="NCBIfam" id="NF010421">
    <property type="entry name" value="PRK13847.1"/>
    <property type="match status" value="1"/>
</dbReference>
<dbReference type="Pfam" id="PF06412">
    <property type="entry name" value="TraD"/>
    <property type="match status" value="1"/>
</dbReference>
<protein>
    <recommendedName>
        <fullName>Conjugal transfer protein TraD</fullName>
    </recommendedName>
</protein>
<accession>Q44347</accession>
<reference key="1">
    <citation type="journal article" date="1996" name="J. Bacteriol.">
        <title>The tra region of the nopaline-type Ti plasmid is a chimera with elements related to the transfer systems of RSF1010, RP4, and F.</title>
        <authorList>
            <person name="Farrand S.K."/>
            <person name="Hwang I."/>
            <person name="Cook D.M."/>
        </authorList>
    </citation>
    <scope>NUCLEOTIDE SEQUENCE [GENOMIC DNA]</scope>
</reference>
<reference key="2">
    <citation type="journal article" date="2001" name="Science">
        <title>The genome of the natural genetic engineer Agrobacterium tumefaciens C58.</title>
        <authorList>
            <person name="Wood D.W."/>
            <person name="Setubal J.C."/>
            <person name="Kaul R."/>
            <person name="Monks D.E."/>
            <person name="Kitajima J.P."/>
            <person name="Okura V.K."/>
            <person name="Zhou Y."/>
            <person name="Chen L."/>
            <person name="Wood G.E."/>
            <person name="Almeida N.F. Jr."/>
            <person name="Woo L."/>
            <person name="Chen Y."/>
            <person name="Paulsen I.T."/>
            <person name="Eisen J.A."/>
            <person name="Karp P.D."/>
            <person name="Bovee D. Sr."/>
            <person name="Chapman P."/>
            <person name="Clendenning J."/>
            <person name="Deatherage G."/>
            <person name="Gillet W."/>
            <person name="Grant C."/>
            <person name="Kutyavin T."/>
            <person name="Levy R."/>
            <person name="Li M.-J."/>
            <person name="McClelland E."/>
            <person name="Palmieri A."/>
            <person name="Raymond C."/>
            <person name="Rouse G."/>
            <person name="Saenphimmachak C."/>
            <person name="Wu Z."/>
            <person name="Romero P."/>
            <person name="Gordon D."/>
            <person name="Zhang S."/>
            <person name="Yoo H."/>
            <person name="Tao Y."/>
            <person name="Biddle P."/>
            <person name="Jung M."/>
            <person name="Krespan W."/>
            <person name="Perry M."/>
            <person name="Gordon-Kamm B."/>
            <person name="Liao L."/>
            <person name="Kim S."/>
            <person name="Hendrick C."/>
            <person name="Zhao Z.-Y."/>
            <person name="Dolan M."/>
            <person name="Chumley F."/>
            <person name="Tingey S.V."/>
            <person name="Tomb J.-F."/>
            <person name="Gordon M.P."/>
            <person name="Olson M.V."/>
            <person name="Nester E.W."/>
        </authorList>
    </citation>
    <scope>NUCLEOTIDE SEQUENCE [LARGE SCALE GENOMIC DNA]</scope>
</reference>
<reference key="3">
    <citation type="journal article" date="2001" name="Science">
        <title>Genome sequence of the plant pathogen and biotechnology agent Agrobacterium tumefaciens C58.</title>
        <authorList>
            <person name="Goodner B."/>
            <person name="Hinkle G."/>
            <person name="Gattung S."/>
            <person name="Miller N."/>
            <person name="Blanchard M."/>
            <person name="Qurollo B."/>
            <person name="Goldman B.S."/>
            <person name="Cao Y."/>
            <person name="Askenazi M."/>
            <person name="Halling C."/>
            <person name="Mullin L."/>
            <person name="Houmiel K."/>
            <person name="Gordon J."/>
            <person name="Vaudin M."/>
            <person name="Iartchouk O."/>
            <person name="Epp A."/>
            <person name="Liu F."/>
            <person name="Wollam C."/>
            <person name="Allinger M."/>
            <person name="Doughty D."/>
            <person name="Scott C."/>
            <person name="Lappas C."/>
            <person name="Markelz B."/>
            <person name="Flanagan C."/>
            <person name="Crowell C."/>
            <person name="Gurson J."/>
            <person name="Lomo C."/>
            <person name="Sear C."/>
            <person name="Strub G."/>
            <person name="Cielo C."/>
            <person name="Slater S."/>
        </authorList>
    </citation>
    <scope>NUCLEOTIDE SEQUENCE [LARGE SCALE GENOMIC DNA]</scope>
    <source>
        <strain>C58 / ATCC 33970</strain>
    </source>
</reference>
<feature type="chain" id="PRO_0000065603" description="Conjugal transfer protein TraD">
    <location>
        <begin position="1"/>
        <end position="71"/>
    </location>
</feature>
<gene>
    <name type="primary">traD</name>
    <name type="ordered locus">Atu6125</name>
    <name type="ORF">AGR_pTi_234</name>
</gene>
<sequence length="71" mass="7842">MAKSMTSNARKKDTREKIELGGLIVKAGLRYEKRALLLGLLVDGGRRLKGDEEERSRLTAIGAEAFGHDDE</sequence>
<proteinExistence type="inferred from homology"/>
<keyword id="KW-0184">Conjugation</keyword>
<keyword id="KW-0614">Plasmid</keyword>
<keyword id="KW-1185">Reference proteome</keyword>